<keyword id="KW-0997">Cell inner membrane</keyword>
<keyword id="KW-1003">Cell membrane</keyword>
<keyword id="KW-0406">Ion transport</keyword>
<keyword id="KW-0472">Membrane</keyword>
<keyword id="KW-0630">Potassium</keyword>
<keyword id="KW-0633">Potassium transport</keyword>
<keyword id="KW-0769">Symport</keyword>
<keyword id="KW-0812">Transmembrane</keyword>
<keyword id="KW-1133">Transmembrane helix</keyword>
<keyword id="KW-0813">Transport</keyword>
<gene>
    <name evidence="1" type="primary">kup1</name>
    <name type="ordered locus">mll1416</name>
</gene>
<reference key="1">
    <citation type="journal article" date="2000" name="DNA Res.">
        <title>Complete genome structure of the nitrogen-fixing symbiotic bacterium Mesorhizobium loti.</title>
        <authorList>
            <person name="Kaneko T."/>
            <person name="Nakamura Y."/>
            <person name="Sato S."/>
            <person name="Asamizu E."/>
            <person name="Kato T."/>
            <person name="Sasamoto S."/>
            <person name="Watanabe A."/>
            <person name="Idesawa K."/>
            <person name="Ishikawa A."/>
            <person name="Kawashima K."/>
            <person name="Kimura T."/>
            <person name="Kishida Y."/>
            <person name="Kiyokawa C."/>
            <person name="Kohara M."/>
            <person name="Matsumoto M."/>
            <person name="Matsuno A."/>
            <person name="Mochizuki Y."/>
            <person name="Nakayama S."/>
            <person name="Nakazaki N."/>
            <person name="Shimpo S."/>
            <person name="Sugimoto M."/>
            <person name="Takeuchi C."/>
            <person name="Yamada M."/>
            <person name="Tabata S."/>
        </authorList>
    </citation>
    <scope>NUCLEOTIDE SEQUENCE [LARGE SCALE GENOMIC DNA]</scope>
    <source>
        <strain>LMG 29417 / CECT 9101 / MAFF 303099</strain>
    </source>
</reference>
<comment type="function">
    <text evidence="1">Transport of potassium into the cell. Likely operates as a K(+):H(+) symporter.</text>
</comment>
<comment type="catalytic activity">
    <reaction evidence="1">
        <text>K(+)(in) + H(+)(in) = K(+)(out) + H(+)(out)</text>
        <dbReference type="Rhea" id="RHEA:28490"/>
        <dbReference type="ChEBI" id="CHEBI:15378"/>
        <dbReference type="ChEBI" id="CHEBI:29103"/>
    </reaction>
    <physiologicalReaction direction="right-to-left" evidence="1">
        <dbReference type="Rhea" id="RHEA:28492"/>
    </physiologicalReaction>
</comment>
<comment type="subcellular location">
    <subcellularLocation>
        <location evidence="1">Cell inner membrane</location>
        <topology evidence="1">Multi-pass membrane protein</topology>
    </subcellularLocation>
</comment>
<comment type="similarity">
    <text evidence="1">Belongs to the HAK/KUP transporter (TC 2.A.72) family.</text>
</comment>
<protein>
    <recommendedName>
        <fullName evidence="1">Probable potassium transport system protein Kup 1</fullName>
    </recommendedName>
</protein>
<accession>Q98KL8</accession>
<dbReference type="EMBL" id="BA000012">
    <property type="protein sequence ID" value="BAB48796.1"/>
    <property type="molecule type" value="Genomic_DNA"/>
</dbReference>
<dbReference type="RefSeq" id="WP_010910149.1">
    <property type="nucleotide sequence ID" value="NC_002678.2"/>
</dbReference>
<dbReference type="KEGG" id="mlo:mll1416"/>
<dbReference type="PATRIC" id="fig|266835.9.peg.1142"/>
<dbReference type="eggNOG" id="COG3158">
    <property type="taxonomic scope" value="Bacteria"/>
</dbReference>
<dbReference type="HOGENOM" id="CLU_008142_4_2_5"/>
<dbReference type="Proteomes" id="UP000000552">
    <property type="component" value="Chromosome"/>
</dbReference>
<dbReference type="GO" id="GO:0005886">
    <property type="term" value="C:plasma membrane"/>
    <property type="evidence" value="ECO:0007669"/>
    <property type="project" value="UniProtKB-SubCell"/>
</dbReference>
<dbReference type="GO" id="GO:0015079">
    <property type="term" value="F:potassium ion transmembrane transporter activity"/>
    <property type="evidence" value="ECO:0007669"/>
    <property type="project" value="UniProtKB-UniRule"/>
</dbReference>
<dbReference type="GO" id="GO:0015293">
    <property type="term" value="F:symporter activity"/>
    <property type="evidence" value="ECO:0007669"/>
    <property type="project" value="UniProtKB-UniRule"/>
</dbReference>
<dbReference type="HAMAP" id="MF_01522">
    <property type="entry name" value="Kup"/>
    <property type="match status" value="1"/>
</dbReference>
<dbReference type="InterPro" id="IPR003855">
    <property type="entry name" value="K+_transporter"/>
</dbReference>
<dbReference type="InterPro" id="IPR053952">
    <property type="entry name" value="K_trans_C"/>
</dbReference>
<dbReference type="InterPro" id="IPR053951">
    <property type="entry name" value="K_trans_N"/>
</dbReference>
<dbReference type="InterPro" id="IPR023051">
    <property type="entry name" value="Kup"/>
</dbReference>
<dbReference type="PANTHER" id="PTHR30540:SF79">
    <property type="entry name" value="LOW AFFINITY POTASSIUM TRANSPORT SYSTEM PROTEIN KUP"/>
    <property type="match status" value="1"/>
</dbReference>
<dbReference type="PANTHER" id="PTHR30540">
    <property type="entry name" value="OSMOTIC STRESS POTASSIUM TRANSPORTER"/>
    <property type="match status" value="1"/>
</dbReference>
<dbReference type="Pfam" id="PF02705">
    <property type="entry name" value="K_trans"/>
    <property type="match status" value="1"/>
</dbReference>
<dbReference type="Pfam" id="PF22776">
    <property type="entry name" value="K_trans_C"/>
    <property type="match status" value="1"/>
</dbReference>
<name>KUP1_RHILO</name>
<sequence>MALANTGSEAEPVEQSSHPEIEQHSTKVLMLGALGVVYGDIGTSPIYAFREALVASSHGTVAQRGDILGVLSLIIWSLTIIVTIKYIMFVLRADNRGEGGVLSLMALARGSFPKRSAVILGIGIVGASLFFGDAVITPAISVLSAVEGMNVVTPTFQPYVVPLTLVILAVVFAVQRFGTGGVGLVFGPVTAVWFLAIGLSGLKHIIADPEILWAISPHYIVAFLIHSPDVAFVTIGAIFLAVTGAEALYADLGHFGRKPIVLAWLSIVFPCLLLNYAGQGAFVLAKNGVVGHPFFEMNEGWALIPMVVLATAATVIASQAVISGAFSLTRQAVQLNMLPRLEILHTSEKQSGQIYMPRVNLLLALVVMMLVVGFGESSKLASAYGISVTGNMLVTTVLLYVVMTRIWKWRLWVAISLTVLFAFIDIGFFASNIVKVFEGGWASLLVAFTIVLGMWTWVRGSRYLFDKTRRNEIPLDFLAGNLLKKKPQLVSGTAVFLTSDPLSAPTALMHSLKHYKVLHEQNVILSVVTAPQPVVPDSDRVKMETVNELFMRVTLTFGYMEQPNIPRALAICRKQGWKFDIMTTSFFLSRRSLKASPNSGMPVWQDRLFIGLARTAADATEYFQIPTGRVVEIGTQVAI</sequence>
<proteinExistence type="inferred from homology"/>
<evidence type="ECO:0000255" key="1">
    <source>
        <dbReference type="HAMAP-Rule" id="MF_01522"/>
    </source>
</evidence>
<evidence type="ECO:0000256" key="2">
    <source>
        <dbReference type="SAM" id="MobiDB-lite"/>
    </source>
</evidence>
<feature type="chain" id="PRO_0000209046" description="Probable potassium transport system protein Kup 1">
    <location>
        <begin position="1"/>
        <end position="639"/>
    </location>
</feature>
<feature type="transmembrane region" description="Helical" evidence="1">
    <location>
        <begin position="29"/>
        <end position="49"/>
    </location>
</feature>
<feature type="transmembrane region" description="Helical" evidence="1">
    <location>
        <begin position="67"/>
        <end position="87"/>
    </location>
</feature>
<feature type="transmembrane region" description="Helical" evidence="1">
    <location>
        <begin position="117"/>
        <end position="137"/>
    </location>
</feature>
<feature type="transmembrane region" description="Helical" evidence="1">
    <location>
        <begin position="154"/>
        <end position="174"/>
    </location>
</feature>
<feature type="transmembrane region" description="Helical" evidence="1">
    <location>
        <begin position="182"/>
        <end position="202"/>
    </location>
</feature>
<feature type="transmembrane region" description="Helical" evidence="1">
    <location>
        <begin position="220"/>
        <end position="240"/>
    </location>
</feature>
<feature type="transmembrane region" description="Helical" evidence="1">
    <location>
        <begin position="260"/>
        <end position="280"/>
    </location>
</feature>
<feature type="transmembrane region" description="Helical" evidence="1">
    <location>
        <begin position="302"/>
        <end position="322"/>
    </location>
</feature>
<feature type="transmembrane region" description="Helical" evidence="1">
    <location>
        <begin position="354"/>
        <end position="374"/>
    </location>
</feature>
<feature type="transmembrane region" description="Helical" evidence="1">
    <location>
        <begin position="383"/>
        <end position="403"/>
    </location>
</feature>
<feature type="transmembrane region" description="Helical" evidence="1">
    <location>
        <begin position="411"/>
        <end position="431"/>
    </location>
</feature>
<feature type="transmembrane region" description="Helical" evidence="1">
    <location>
        <begin position="436"/>
        <end position="456"/>
    </location>
</feature>
<feature type="region of interest" description="Disordered" evidence="2">
    <location>
        <begin position="1"/>
        <end position="21"/>
    </location>
</feature>
<feature type="compositionally biased region" description="Polar residues" evidence="2">
    <location>
        <begin position="1"/>
        <end position="16"/>
    </location>
</feature>
<organism>
    <name type="scientific">Mesorhizobium japonicum (strain LMG 29417 / CECT 9101 / MAFF 303099)</name>
    <name type="common">Mesorhizobium loti (strain MAFF 303099)</name>
    <dbReference type="NCBI Taxonomy" id="266835"/>
    <lineage>
        <taxon>Bacteria</taxon>
        <taxon>Pseudomonadati</taxon>
        <taxon>Pseudomonadota</taxon>
        <taxon>Alphaproteobacteria</taxon>
        <taxon>Hyphomicrobiales</taxon>
        <taxon>Phyllobacteriaceae</taxon>
        <taxon>Mesorhizobium</taxon>
    </lineage>
</organism>